<dbReference type="EMBL" id="EU421930">
    <property type="protein sequence ID" value="ABZ82347.1"/>
    <property type="molecule type" value="mRNA"/>
</dbReference>
<dbReference type="EMBL" id="EU421931">
    <property type="protein sequence ID" value="ABZ82348.1"/>
    <property type="molecule type" value="mRNA"/>
</dbReference>
<dbReference type="SMR" id="B1A4Q6"/>
<dbReference type="GO" id="GO:0005576">
    <property type="term" value="C:extracellular region"/>
    <property type="evidence" value="ECO:0007669"/>
    <property type="project" value="UniProtKB-SubCell"/>
</dbReference>
<dbReference type="GO" id="GO:0030246">
    <property type="term" value="F:carbohydrate binding"/>
    <property type="evidence" value="ECO:0007669"/>
    <property type="project" value="UniProtKB-KW"/>
</dbReference>
<dbReference type="GO" id="GO:0019834">
    <property type="term" value="F:phospholipase A2 inhibitor activity"/>
    <property type="evidence" value="ECO:0007669"/>
    <property type="project" value="UniProtKB-KW"/>
</dbReference>
<dbReference type="Gene3D" id="3.10.100.10">
    <property type="entry name" value="Mannose-Binding Protein A, subunit A"/>
    <property type="match status" value="1"/>
</dbReference>
<dbReference type="InterPro" id="IPR001304">
    <property type="entry name" value="C-type_lectin-like"/>
</dbReference>
<dbReference type="InterPro" id="IPR016186">
    <property type="entry name" value="C-type_lectin-like/link_sf"/>
</dbReference>
<dbReference type="InterPro" id="IPR018378">
    <property type="entry name" value="C-type_lectin_CS"/>
</dbReference>
<dbReference type="InterPro" id="IPR016187">
    <property type="entry name" value="CTDL_fold"/>
</dbReference>
<dbReference type="Pfam" id="PF00059">
    <property type="entry name" value="Lectin_C"/>
    <property type="match status" value="1"/>
</dbReference>
<dbReference type="SUPFAM" id="SSF56436">
    <property type="entry name" value="C-type lectin-like"/>
    <property type="match status" value="1"/>
</dbReference>
<dbReference type="PROSITE" id="PS00615">
    <property type="entry name" value="C_TYPE_LECTIN_1"/>
    <property type="match status" value="1"/>
</dbReference>
<dbReference type="PROSITE" id="PS50041">
    <property type="entry name" value="C_TYPE_LECTIN_2"/>
    <property type="match status" value="1"/>
</dbReference>
<name>PLIA4_CRODU</name>
<reference key="1">
    <citation type="submission" date="2008-01" db="EMBL/GenBank/DDBJ databases">
        <title>A profile of the phospholipase A2 inhibitors of the alpha class prospected in Brazilian Crotalidae snakes: structural and phylogenetic analysis.</title>
        <authorList>
            <person name="Estevao-Costa M.I."/>
            <person name="Costa M.A.F."/>
            <person name="Mudado M.A."/>
            <person name="Franco G.R."/>
            <person name="Fortes-Dias C.L."/>
        </authorList>
    </citation>
    <scope>NUCLEOTIDE SEQUENCE [MRNA]</scope>
    <source>
        <tissue>Liver</tissue>
    </source>
</reference>
<feature type="signal peptide" evidence="1">
    <location>
        <begin position="1"/>
        <end position="19"/>
    </location>
</feature>
<feature type="chain" id="PRO_0000356349" description="Phospholipase A2 inhibitor A4/A5">
    <location>
        <begin position="20"/>
        <end position="166"/>
    </location>
</feature>
<feature type="domain" description="C-type lectin" evidence="5">
    <location>
        <begin position="46"/>
        <end position="161"/>
    </location>
</feature>
<feature type="glycosylation site" description="N-linked (GlcNAc...) asparagine" evidence="4">
    <location>
        <position position="122"/>
    </location>
</feature>
<feature type="disulfide bond" evidence="3">
    <location>
        <begin position="83"/>
        <end position="160"/>
    </location>
</feature>
<feature type="disulfide bond" evidence="3">
    <location>
        <begin position="138"/>
        <end position="152"/>
    </location>
</feature>
<evidence type="ECO:0000250" key="1"/>
<evidence type="ECO:0000250" key="2">
    <source>
        <dbReference type="UniProtKB" id="A1XRN2"/>
    </source>
</evidence>
<evidence type="ECO:0000250" key="3">
    <source>
        <dbReference type="UniProtKB" id="P21755"/>
    </source>
</evidence>
<evidence type="ECO:0000255" key="4"/>
<evidence type="ECO:0000255" key="5">
    <source>
        <dbReference type="PROSITE-ProRule" id="PRU00040"/>
    </source>
</evidence>
<evidence type="ECO:0000305" key="6"/>
<evidence type="ECO:0000305" key="7">
    <source ref="1"/>
</evidence>
<proteinExistence type="evidence at transcript level"/>
<sequence>MRLILLSGLLLLGTFLVNGHDADPEGEVLNSVLLTLMKLQKEFTNLFHAFLTVHKARSFGSGSERLYVSNKEIKNFEALKVICKQAGGQIPSPQLENQNKAFANVLERHNKEAFLVVGDSGNFTNWAAGQPNKADGTCVKADKQGFWHSTSCDDNLLVVCEFYFIL</sequence>
<accession>B1A4Q6</accession>
<protein>
    <recommendedName>
        <fullName>Phospholipase A2 inhibitor A4/A5</fullName>
        <shortName>alpha-PLI</shortName>
    </recommendedName>
</protein>
<keyword id="KW-0106">Calcium</keyword>
<keyword id="KW-1015">Disulfide bond</keyword>
<keyword id="KW-0325">Glycoprotein</keyword>
<keyword id="KW-0430">Lectin</keyword>
<keyword id="KW-0593">Phospholipase A2 inhibitor</keyword>
<keyword id="KW-0964">Secreted</keyword>
<keyword id="KW-0732">Signal</keyword>
<organism>
    <name type="scientific">Crotalus durissus terrificus</name>
    <name type="common">South American rattlesnake</name>
    <dbReference type="NCBI Taxonomy" id="8732"/>
    <lineage>
        <taxon>Eukaryota</taxon>
        <taxon>Metazoa</taxon>
        <taxon>Chordata</taxon>
        <taxon>Craniata</taxon>
        <taxon>Vertebrata</taxon>
        <taxon>Euteleostomi</taxon>
        <taxon>Lepidosauria</taxon>
        <taxon>Squamata</taxon>
        <taxon>Bifurcata</taxon>
        <taxon>Unidentata</taxon>
        <taxon>Episquamata</taxon>
        <taxon>Toxicofera</taxon>
        <taxon>Serpentes</taxon>
        <taxon>Colubroidea</taxon>
        <taxon>Viperidae</taxon>
        <taxon>Crotalinae</taxon>
        <taxon>Crotalus</taxon>
    </lineage>
</organism>
<comment type="function">
    <text evidence="1">This phospholipase A2 inhibitor binds directly phospholipase A2 in the presence or absence of calcium.</text>
</comment>
<comment type="subunit">
    <text evidence="2">Homotrimer; non-covalently linked.</text>
</comment>
<comment type="subcellular location">
    <subcellularLocation>
        <location evidence="7">Secreted</location>
    </subcellularLocation>
    <text evidence="6">Secreted in plasma.</text>
</comment>
<comment type="tissue specificity">
    <text evidence="7">Expressed by the liver.</text>
</comment>
<comment type="similarity">
    <text evidence="6">Belongs to the alpha-type phospholipase A2 inhibitor family.</text>
</comment>